<reference key="1">
    <citation type="journal article" date="2003" name="DNA Res.">
        <title>Prediction of the coding sequences of mouse homologues of KIAA gene: III. The complete nucleotide sequences of 500 mouse KIAA-homologous cDNAs identified by screening of terminal sequences of cDNA clones randomly sampled from size-fractionated libraries.</title>
        <authorList>
            <person name="Okazaki N."/>
            <person name="Kikuno R."/>
            <person name="Ohara R."/>
            <person name="Inamoto S."/>
            <person name="Koseki H."/>
            <person name="Hiraoka S."/>
            <person name="Saga Y."/>
            <person name="Nagase T."/>
            <person name="Ohara O."/>
            <person name="Koga H."/>
        </authorList>
    </citation>
    <scope>NUCLEOTIDE SEQUENCE [LARGE SCALE MRNA] (ISOFORM 1)</scope>
    <source>
        <tissue>Embryonic tail</tissue>
    </source>
</reference>
<reference key="2">
    <citation type="journal article" date="2005" name="Science">
        <title>The transcriptional landscape of the mammalian genome.</title>
        <authorList>
            <person name="Carninci P."/>
            <person name="Kasukawa T."/>
            <person name="Katayama S."/>
            <person name="Gough J."/>
            <person name="Frith M.C."/>
            <person name="Maeda N."/>
            <person name="Oyama R."/>
            <person name="Ravasi T."/>
            <person name="Lenhard B."/>
            <person name="Wells C."/>
            <person name="Kodzius R."/>
            <person name="Shimokawa K."/>
            <person name="Bajic V.B."/>
            <person name="Brenner S.E."/>
            <person name="Batalov S."/>
            <person name="Forrest A.R."/>
            <person name="Zavolan M."/>
            <person name="Davis M.J."/>
            <person name="Wilming L.G."/>
            <person name="Aidinis V."/>
            <person name="Allen J.E."/>
            <person name="Ambesi-Impiombato A."/>
            <person name="Apweiler R."/>
            <person name="Aturaliya R.N."/>
            <person name="Bailey T.L."/>
            <person name="Bansal M."/>
            <person name="Baxter L."/>
            <person name="Beisel K.W."/>
            <person name="Bersano T."/>
            <person name="Bono H."/>
            <person name="Chalk A.M."/>
            <person name="Chiu K.P."/>
            <person name="Choudhary V."/>
            <person name="Christoffels A."/>
            <person name="Clutterbuck D.R."/>
            <person name="Crowe M.L."/>
            <person name="Dalla E."/>
            <person name="Dalrymple B.P."/>
            <person name="de Bono B."/>
            <person name="Della Gatta G."/>
            <person name="di Bernardo D."/>
            <person name="Down T."/>
            <person name="Engstrom P."/>
            <person name="Fagiolini M."/>
            <person name="Faulkner G."/>
            <person name="Fletcher C.F."/>
            <person name="Fukushima T."/>
            <person name="Furuno M."/>
            <person name="Futaki S."/>
            <person name="Gariboldi M."/>
            <person name="Georgii-Hemming P."/>
            <person name="Gingeras T.R."/>
            <person name="Gojobori T."/>
            <person name="Green R.E."/>
            <person name="Gustincich S."/>
            <person name="Harbers M."/>
            <person name="Hayashi Y."/>
            <person name="Hensch T.K."/>
            <person name="Hirokawa N."/>
            <person name="Hill D."/>
            <person name="Huminiecki L."/>
            <person name="Iacono M."/>
            <person name="Ikeo K."/>
            <person name="Iwama A."/>
            <person name="Ishikawa T."/>
            <person name="Jakt M."/>
            <person name="Kanapin A."/>
            <person name="Katoh M."/>
            <person name="Kawasawa Y."/>
            <person name="Kelso J."/>
            <person name="Kitamura H."/>
            <person name="Kitano H."/>
            <person name="Kollias G."/>
            <person name="Krishnan S.P."/>
            <person name="Kruger A."/>
            <person name="Kummerfeld S.K."/>
            <person name="Kurochkin I.V."/>
            <person name="Lareau L.F."/>
            <person name="Lazarevic D."/>
            <person name="Lipovich L."/>
            <person name="Liu J."/>
            <person name="Liuni S."/>
            <person name="McWilliam S."/>
            <person name="Madan Babu M."/>
            <person name="Madera M."/>
            <person name="Marchionni L."/>
            <person name="Matsuda H."/>
            <person name="Matsuzawa S."/>
            <person name="Miki H."/>
            <person name="Mignone F."/>
            <person name="Miyake S."/>
            <person name="Morris K."/>
            <person name="Mottagui-Tabar S."/>
            <person name="Mulder N."/>
            <person name="Nakano N."/>
            <person name="Nakauchi H."/>
            <person name="Ng P."/>
            <person name="Nilsson R."/>
            <person name="Nishiguchi S."/>
            <person name="Nishikawa S."/>
            <person name="Nori F."/>
            <person name="Ohara O."/>
            <person name="Okazaki Y."/>
            <person name="Orlando V."/>
            <person name="Pang K.C."/>
            <person name="Pavan W.J."/>
            <person name="Pavesi G."/>
            <person name="Pesole G."/>
            <person name="Petrovsky N."/>
            <person name="Piazza S."/>
            <person name="Reed J."/>
            <person name="Reid J.F."/>
            <person name="Ring B.Z."/>
            <person name="Ringwald M."/>
            <person name="Rost B."/>
            <person name="Ruan Y."/>
            <person name="Salzberg S.L."/>
            <person name="Sandelin A."/>
            <person name="Schneider C."/>
            <person name="Schoenbach C."/>
            <person name="Sekiguchi K."/>
            <person name="Semple C.A."/>
            <person name="Seno S."/>
            <person name="Sessa L."/>
            <person name="Sheng Y."/>
            <person name="Shibata Y."/>
            <person name="Shimada H."/>
            <person name="Shimada K."/>
            <person name="Silva D."/>
            <person name="Sinclair B."/>
            <person name="Sperling S."/>
            <person name="Stupka E."/>
            <person name="Sugiura K."/>
            <person name="Sultana R."/>
            <person name="Takenaka Y."/>
            <person name="Taki K."/>
            <person name="Tammoja K."/>
            <person name="Tan S.L."/>
            <person name="Tang S."/>
            <person name="Taylor M.S."/>
            <person name="Tegner J."/>
            <person name="Teichmann S.A."/>
            <person name="Ueda H.R."/>
            <person name="van Nimwegen E."/>
            <person name="Verardo R."/>
            <person name="Wei C.L."/>
            <person name="Yagi K."/>
            <person name="Yamanishi H."/>
            <person name="Zabarovsky E."/>
            <person name="Zhu S."/>
            <person name="Zimmer A."/>
            <person name="Hide W."/>
            <person name="Bult C."/>
            <person name="Grimmond S.M."/>
            <person name="Teasdale R.D."/>
            <person name="Liu E.T."/>
            <person name="Brusic V."/>
            <person name="Quackenbush J."/>
            <person name="Wahlestedt C."/>
            <person name="Mattick J.S."/>
            <person name="Hume D.A."/>
            <person name="Kai C."/>
            <person name="Sasaki D."/>
            <person name="Tomaru Y."/>
            <person name="Fukuda S."/>
            <person name="Kanamori-Katayama M."/>
            <person name="Suzuki M."/>
            <person name="Aoki J."/>
            <person name="Arakawa T."/>
            <person name="Iida J."/>
            <person name="Imamura K."/>
            <person name="Itoh M."/>
            <person name="Kato T."/>
            <person name="Kawaji H."/>
            <person name="Kawagashira N."/>
            <person name="Kawashima T."/>
            <person name="Kojima M."/>
            <person name="Kondo S."/>
            <person name="Konno H."/>
            <person name="Nakano K."/>
            <person name="Ninomiya N."/>
            <person name="Nishio T."/>
            <person name="Okada M."/>
            <person name="Plessy C."/>
            <person name="Shibata K."/>
            <person name="Shiraki T."/>
            <person name="Suzuki S."/>
            <person name="Tagami M."/>
            <person name="Waki K."/>
            <person name="Watahiki A."/>
            <person name="Okamura-Oho Y."/>
            <person name="Suzuki H."/>
            <person name="Kawai J."/>
            <person name="Hayashizaki Y."/>
        </authorList>
    </citation>
    <scope>NUCLEOTIDE SEQUENCE [LARGE SCALE MRNA] (ISOFORMS 1 AND 2)</scope>
    <source>
        <strain>C57BL/6J</strain>
        <tissue>B-cell</tissue>
        <tissue>Skin</tissue>
        <tissue>Testis</tissue>
        <tissue>Thymus</tissue>
    </source>
</reference>
<reference key="3">
    <citation type="journal article" date="2009" name="PLoS Biol.">
        <title>Lineage-specific biology revealed by a finished genome assembly of the mouse.</title>
        <authorList>
            <person name="Church D.M."/>
            <person name="Goodstadt L."/>
            <person name="Hillier L.W."/>
            <person name="Zody M.C."/>
            <person name="Goldstein S."/>
            <person name="She X."/>
            <person name="Bult C.J."/>
            <person name="Agarwala R."/>
            <person name="Cherry J.L."/>
            <person name="DiCuccio M."/>
            <person name="Hlavina W."/>
            <person name="Kapustin Y."/>
            <person name="Meric P."/>
            <person name="Maglott D."/>
            <person name="Birtle Z."/>
            <person name="Marques A.C."/>
            <person name="Graves T."/>
            <person name="Zhou S."/>
            <person name="Teague B."/>
            <person name="Potamousis K."/>
            <person name="Churas C."/>
            <person name="Place M."/>
            <person name="Herschleb J."/>
            <person name="Runnheim R."/>
            <person name="Forrest D."/>
            <person name="Amos-Landgraf J."/>
            <person name="Schwartz D.C."/>
            <person name="Cheng Z."/>
            <person name="Lindblad-Toh K."/>
            <person name="Eichler E.E."/>
            <person name="Ponting C.P."/>
        </authorList>
    </citation>
    <scope>NUCLEOTIDE SEQUENCE [LARGE SCALE GENOMIC DNA]</scope>
    <source>
        <strain>C57BL/6J</strain>
    </source>
</reference>
<reference key="4">
    <citation type="journal article" date="2004" name="Genome Res.">
        <title>The status, quality, and expansion of the NIH full-length cDNA project: the Mammalian Gene Collection (MGC).</title>
        <authorList>
            <consortium name="The MGC Project Team"/>
        </authorList>
    </citation>
    <scope>NUCLEOTIDE SEQUENCE [LARGE SCALE MRNA] (ISOFORM 1)</scope>
    <source>
        <strain>FVB/N</strain>
        <tissue>Mammary tumor</tissue>
    </source>
</reference>
<reference key="5">
    <citation type="journal article" date="2010" name="Cell">
        <title>A tissue-specific atlas of mouse protein phosphorylation and expression.</title>
        <authorList>
            <person name="Huttlin E.L."/>
            <person name="Jedrychowski M.P."/>
            <person name="Elias J.E."/>
            <person name="Goswami T."/>
            <person name="Rad R."/>
            <person name="Beausoleil S.A."/>
            <person name="Villen J."/>
            <person name="Haas W."/>
            <person name="Sowa M.E."/>
            <person name="Gygi S.P."/>
        </authorList>
    </citation>
    <scope>PHOSPHORYLATION [LARGE SCALE ANALYSIS] AT SER-117</scope>
    <scope>IDENTIFICATION BY MASS SPECTROMETRY [LARGE SCALE ANALYSIS]</scope>
    <source>
        <tissue>Lung</tissue>
        <tissue>Pancreas</tissue>
        <tissue>Spleen</tissue>
        <tissue>Testis</tissue>
    </source>
</reference>
<feature type="chain" id="PRO_0000254604" description="Serine/threonine-protein phosphatase 4 regulatory subunit 3B">
    <location>
        <begin position="1"/>
        <end position="820"/>
    </location>
</feature>
<feature type="domain" description="WH1">
    <location>
        <begin position="1"/>
        <end position="100"/>
    </location>
</feature>
<feature type="region of interest" description="Disordered" evidence="3">
    <location>
        <begin position="687"/>
        <end position="820"/>
    </location>
</feature>
<feature type="compositionally biased region" description="Basic and acidic residues" evidence="3">
    <location>
        <begin position="701"/>
        <end position="732"/>
    </location>
</feature>
<feature type="compositionally biased region" description="Polar residues" evidence="3">
    <location>
        <begin position="744"/>
        <end position="789"/>
    </location>
</feature>
<feature type="compositionally biased region" description="Acidic residues" evidence="3">
    <location>
        <begin position="798"/>
        <end position="809"/>
    </location>
</feature>
<feature type="modified residue" description="Phosphoserine" evidence="6">
    <location>
        <position position="117"/>
    </location>
</feature>
<feature type="modified residue" description="Phosphoserine" evidence="2">
    <location>
        <position position="663"/>
    </location>
</feature>
<feature type="modified residue" description="Phosphoserine" evidence="2">
    <location>
        <position position="811"/>
    </location>
</feature>
<feature type="splice variant" id="VSP_021264" description="In isoform 2." evidence="4">
    <original>EDI</original>
    <variation>VSL</variation>
    <location>
        <begin position="614"/>
        <end position="616"/>
    </location>
</feature>
<feature type="splice variant" id="VSP_021265" description="In isoform 2." evidence="4">
    <location>
        <begin position="617"/>
        <end position="820"/>
    </location>
</feature>
<feature type="sequence conflict" description="In Ref. 2; BAC30967." evidence="5" ref="2">
    <original>T</original>
    <variation>I</variation>
    <location>
        <position position="110"/>
    </location>
</feature>
<feature type="sequence conflict" description="In Ref. 3; BAC41046 and 4; AAH06870." evidence="5" ref="3 4">
    <original>A</original>
    <variation>T</variation>
    <location>
        <position position="136"/>
    </location>
</feature>
<feature type="sequence conflict" description="In Ref. 3; BAC41046." evidence="5" ref="3">
    <original>Q</original>
    <variation>P</variation>
    <location>
        <position position="261"/>
    </location>
</feature>
<feature type="sequence conflict" description="In Ref. 3; BAC41046." evidence="5" ref="3">
    <original>L</original>
    <variation>W</variation>
    <location>
        <position position="333"/>
    </location>
</feature>
<feature type="sequence conflict" description="In Ref. 3; BAC41046." evidence="5" ref="3">
    <original>K</original>
    <variation>Q</variation>
    <location>
        <position position="357"/>
    </location>
</feature>
<feature type="sequence conflict" description="In Ref. 3; BAC41046 and 4; AAH06870." evidence="5" ref="3 4">
    <original>M</original>
    <variation>V</variation>
    <location>
        <position position="374"/>
    </location>
</feature>
<feature type="sequence conflict" description="In Ref. 3; BAC41046." evidence="5" ref="3">
    <original>N</original>
    <variation>D</variation>
    <location>
        <position position="548"/>
    </location>
</feature>
<feature type="sequence conflict" description="In Ref. 3; BAC41046." evidence="5" ref="3">
    <original>I</original>
    <variation>V</variation>
    <location>
        <position position="565"/>
    </location>
</feature>
<gene>
    <name evidence="2" type="primary">Ppp4r3b</name>
    <name type="synonym">Kiaa1387</name>
    <name type="synonym">Pp4r3b</name>
    <name type="synonym">Smek2</name>
</gene>
<dbReference type="EMBL" id="AK129344">
    <property type="protein sequence ID" value="BAC98154.1"/>
    <property type="status" value="ALT_INIT"/>
    <property type="molecule type" value="mRNA"/>
</dbReference>
<dbReference type="EMBL" id="AK037253">
    <property type="protein sequence ID" value="BAC29779.2"/>
    <property type="molecule type" value="mRNA"/>
</dbReference>
<dbReference type="EMBL" id="AK041513">
    <property type="protein sequence ID" value="BAC30967.1"/>
    <property type="molecule type" value="mRNA"/>
</dbReference>
<dbReference type="EMBL" id="AK090014">
    <property type="protein sequence ID" value="BAC41046.1"/>
    <property type="molecule type" value="mRNA"/>
</dbReference>
<dbReference type="EMBL" id="AK133211">
    <property type="protein sequence ID" value="BAE21560.1"/>
    <property type="molecule type" value="mRNA"/>
</dbReference>
<dbReference type="EMBL" id="BX000351">
    <property type="status" value="NOT_ANNOTATED_CDS"/>
    <property type="molecule type" value="Genomic_DNA"/>
</dbReference>
<dbReference type="EMBL" id="BX294116">
    <property type="status" value="NOT_ANNOTATED_CDS"/>
    <property type="molecule type" value="Genomic_DNA"/>
</dbReference>
<dbReference type="EMBL" id="BC006870">
    <property type="protein sequence ID" value="AAH06870.1"/>
    <property type="molecule type" value="mRNA"/>
</dbReference>
<dbReference type="CCDS" id="CCDS24492.1">
    <molecule id="Q922R5-1"/>
</dbReference>
<dbReference type="RefSeq" id="NP_598795.2">
    <molecule id="Q922R5-1"/>
    <property type="nucleotide sequence ID" value="NM_134034.3"/>
</dbReference>
<dbReference type="ComplexPortal" id="CPX-164">
    <property type="entry name" value="PPP4C-PPP4R2-PPP4R3B protein phosphatase 4 complex"/>
</dbReference>
<dbReference type="FunCoup" id="Q922R5">
    <property type="interactions" value="4477"/>
</dbReference>
<dbReference type="STRING" id="10090.ENSMUSP00000020755"/>
<dbReference type="GlyGen" id="Q922R5">
    <property type="glycosylation" value="3 sites, 1 O-linked glycan (2 sites)"/>
</dbReference>
<dbReference type="iPTMnet" id="Q922R5"/>
<dbReference type="PhosphoSitePlus" id="Q922R5"/>
<dbReference type="SwissPalm" id="Q922R5"/>
<dbReference type="PaxDb" id="10090-ENSMUSP00000020755"/>
<dbReference type="PeptideAtlas" id="Q922R5"/>
<dbReference type="ProteomicsDB" id="294366">
    <molecule id="Q922R5-1"/>
</dbReference>
<dbReference type="ProteomicsDB" id="294367">
    <molecule id="Q922R5-2"/>
</dbReference>
<dbReference type="Pumba" id="Q922R5"/>
<dbReference type="Antibodypedia" id="73190">
    <property type="antibodies" value="160 antibodies from 25 providers"/>
</dbReference>
<dbReference type="DNASU" id="104570"/>
<dbReference type="Ensembl" id="ENSMUST00000020755.12">
    <molecule id="Q922R5-1"/>
    <property type="protein sequence ID" value="ENSMUSP00000020755.6"/>
    <property type="gene ID" value="ENSMUSG00000020463.16"/>
</dbReference>
<dbReference type="Ensembl" id="ENSMUST00000102856.9">
    <molecule id="Q922R5-2"/>
    <property type="protein sequence ID" value="ENSMUSP00000099920.3"/>
    <property type="gene ID" value="ENSMUSG00000020463.16"/>
</dbReference>
<dbReference type="GeneID" id="104570"/>
<dbReference type="KEGG" id="mmu:104570"/>
<dbReference type="UCSC" id="uc007igq.2">
    <molecule id="Q922R5-2"/>
    <property type="organism name" value="mouse"/>
</dbReference>
<dbReference type="UCSC" id="uc007igs.2">
    <molecule id="Q922R5-1"/>
    <property type="organism name" value="mouse"/>
</dbReference>
<dbReference type="AGR" id="MGI:2144474"/>
<dbReference type="CTD" id="57223"/>
<dbReference type="MGI" id="MGI:2144474">
    <property type="gene designation" value="Ppp4r3b"/>
</dbReference>
<dbReference type="VEuPathDB" id="HostDB:ENSMUSG00000020463"/>
<dbReference type="eggNOG" id="KOG2175">
    <property type="taxonomic scope" value="Eukaryota"/>
</dbReference>
<dbReference type="GeneTree" id="ENSGT00390000018199"/>
<dbReference type="HOGENOM" id="CLU_004909_3_1_1"/>
<dbReference type="InParanoid" id="Q922R5"/>
<dbReference type="OMA" id="YHRYMIS"/>
<dbReference type="OrthoDB" id="27483at2759"/>
<dbReference type="PhylomeDB" id="Q922R5"/>
<dbReference type="TreeFam" id="TF315190"/>
<dbReference type="BioGRID-ORCS" id="104570">
    <property type="hits" value="4 hits in 81 CRISPR screens"/>
</dbReference>
<dbReference type="ChiTaRS" id="Smek2">
    <property type="organism name" value="mouse"/>
</dbReference>
<dbReference type="PRO" id="PR:Q922R5"/>
<dbReference type="Proteomes" id="UP000000589">
    <property type="component" value="Chromosome 11"/>
</dbReference>
<dbReference type="RNAct" id="Q922R5">
    <property type="molecule type" value="protein"/>
</dbReference>
<dbReference type="Bgee" id="ENSMUSG00000020463">
    <property type="expression patterns" value="Expressed in saccule of membranous labyrinth and 255 other cell types or tissues"/>
</dbReference>
<dbReference type="ExpressionAtlas" id="Q922R5">
    <property type="expression patterns" value="baseline and differential"/>
</dbReference>
<dbReference type="GO" id="GO:0005813">
    <property type="term" value="C:centrosome"/>
    <property type="evidence" value="ECO:0007669"/>
    <property type="project" value="UniProtKB-SubCell"/>
</dbReference>
<dbReference type="GO" id="GO:0000785">
    <property type="term" value="C:chromatin"/>
    <property type="evidence" value="ECO:0000266"/>
    <property type="project" value="ComplexPortal"/>
</dbReference>
<dbReference type="GO" id="GO:0005737">
    <property type="term" value="C:cytoplasm"/>
    <property type="evidence" value="ECO:0000314"/>
    <property type="project" value="MGI"/>
</dbReference>
<dbReference type="GO" id="GO:0016607">
    <property type="term" value="C:nuclear speck"/>
    <property type="evidence" value="ECO:0007669"/>
    <property type="project" value="Ensembl"/>
</dbReference>
<dbReference type="GO" id="GO:0005634">
    <property type="term" value="C:nucleus"/>
    <property type="evidence" value="ECO:0000314"/>
    <property type="project" value="MGI"/>
</dbReference>
<dbReference type="GO" id="GO:0030289">
    <property type="term" value="C:protein phosphatase 4 complex"/>
    <property type="evidence" value="ECO:0000314"/>
    <property type="project" value="MGI"/>
</dbReference>
<dbReference type="GO" id="GO:0019888">
    <property type="term" value="F:protein phosphatase regulator activity"/>
    <property type="evidence" value="ECO:0007669"/>
    <property type="project" value="InterPro"/>
</dbReference>
<dbReference type="GO" id="GO:0006094">
    <property type="term" value="P:gluconeogenesis"/>
    <property type="evidence" value="ECO:0000314"/>
    <property type="project" value="MGI"/>
</dbReference>
<dbReference type="GO" id="GO:0045722">
    <property type="term" value="P:positive regulation of gluconeogenesis"/>
    <property type="evidence" value="ECO:0000314"/>
    <property type="project" value="MGI"/>
</dbReference>
<dbReference type="GO" id="GO:2000779">
    <property type="term" value="P:regulation of double-strand break repair"/>
    <property type="evidence" value="ECO:0000266"/>
    <property type="project" value="ComplexPortal"/>
</dbReference>
<dbReference type="FunFam" id="2.30.29.30:FF:000051">
    <property type="entry name" value="Serine/threonine-protein phosphatase 4 regulatory subunit 3B"/>
    <property type="match status" value="1"/>
</dbReference>
<dbReference type="Gene3D" id="1.25.10.10">
    <property type="entry name" value="Leucine-rich Repeat Variant"/>
    <property type="match status" value="1"/>
</dbReference>
<dbReference type="Gene3D" id="2.30.29.30">
    <property type="entry name" value="Pleckstrin-homology domain (PH domain)/Phosphotyrosine-binding domain (PTB)"/>
    <property type="match status" value="1"/>
</dbReference>
<dbReference type="InterPro" id="IPR011989">
    <property type="entry name" value="ARM-like"/>
</dbReference>
<dbReference type="InterPro" id="IPR016024">
    <property type="entry name" value="ARM-type_fold"/>
</dbReference>
<dbReference type="InterPro" id="IPR055236">
    <property type="entry name" value="EVH1_PP4R3"/>
</dbReference>
<dbReference type="InterPro" id="IPR006887">
    <property type="entry name" value="P4R3-like_central_dom"/>
</dbReference>
<dbReference type="InterPro" id="IPR011993">
    <property type="entry name" value="PH-like_dom_sf"/>
</dbReference>
<dbReference type="InterPro" id="IPR051137">
    <property type="entry name" value="PP4R3-like"/>
</dbReference>
<dbReference type="PANTHER" id="PTHR23318">
    <property type="entry name" value="ATP SYNTHASE GAMMA-RELATED"/>
    <property type="match status" value="1"/>
</dbReference>
<dbReference type="PANTHER" id="PTHR23318:SF18">
    <property type="entry name" value="SERINE_THREONINE-PROTEIN PHOSPHATASE 4 REGULATORY SUBUNIT 3B"/>
    <property type="match status" value="1"/>
</dbReference>
<dbReference type="Pfam" id="PF22972">
    <property type="entry name" value="EVH1_PP4R3"/>
    <property type="match status" value="1"/>
</dbReference>
<dbReference type="Pfam" id="PF04802">
    <property type="entry name" value="PP4R3"/>
    <property type="match status" value="1"/>
</dbReference>
<dbReference type="SUPFAM" id="SSF48371">
    <property type="entry name" value="ARM repeat"/>
    <property type="match status" value="1"/>
</dbReference>
<dbReference type="SUPFAM" id="SSF50729">
    <property type="entry name" value="PH domain-like"/>
    <property type="match status" value="1"/>
</dbReference>
<proteinExistence type="evidence at protein level"/>
<sequence>MSDTRRRVKVYTLNEDRQWDDRGTGHVSSTYVEELKGMSLLVRAESDGSLLLESKINPNTAYQKQQDTLIVWSEAENYDLALSFQEKAGCDEIWEKICQVQGKDPSVEVTQDLIDESEEERFEEMPETSHLIDLPACELSKLEEIADLVTSVLSSPIRREKLALALENEGYIKKLLQLFQACENLENTEGLHHLYEIIRGILFLNKATLFEVMFSDECIMDVVGCLEYDPALAQPKRHREFLTKTAKFKEVIPITDSELRQKIHQTYRVQYIQDIILPTPSVFEENFLSTLTSFIFFNKVEIVSMLQEDEKFLSEVFAQLTDEATDDDKRRELVNFFKEFCAFSQTLQPQNRDAFFKTLAKLGILPALEIVMGMDDLQVRSAATDIFSYLVEFSPSMVREFVMQEAQQSDDDVLLINVVIEQMICDTDPELGGAVQLMGLLRTLIDPENMLATTNKTEKSEFLNFFYNHCMHVLTAPLLTNTSEDKCEKDNMLGSNTTNTICPDNYQTAQLLALILELLTFCVEHHTYHIKNYIMNKDLLRRVLVLMNSKHTFLALCALRFMRRIIGLKDEFYNRYITKGNLFEPVINALLDNGTRYNLLNSAVIELFEFIRVEDIKSLTAHIVENFYKALESIEYVQTFKGLKTKYEQEKDRQNQKLNSVPSILRSNRFRRDAKALEEDEEMWFNEDDDEEGKAVITPVEKSKTEDDFPDSYEKFMETKKAKESEDKENLPKRASSGGFKFTFSHSPSATNGTNSTNSKSVVSQTTPASSNVASSKTTSLATSVTATKGNLVGLVDYPDDEEEDEEEESSPRKRPRLGS</sequence>
<comment type="function">
    <text evidence="1">Regulatory subunit of serine/threonine-protein phosphatase 4 (PP4). May regulate the activity of PPP4C at centrosomal microtubule organizing centers (By similarity).</text>
</comment>
<comment type="subunit">
    <text>Serine/threonine-protein phosphatase 4 (PP4) occurs in different assemblies of the catalytic and one or more regulatory subunits. Component of the PP4 complex PPP4C-PPP4R2-PPP4R3B.</text>
</comment>
<comment type="subcellular location">
    <subcellularLocation>
        <location>Cytoplasm</location>
    </subcellularLocation>
    <subcellularLocation>
        <location>Cytoplasm</location>
        <location>Cytoskeleton</location>
        <location>Microtubule organizing center</location>
        <location>Centrosome</location>
    </subcellularLocation>
    <subcellularLocation>
        <location>Nucleus</location>
    </subcellularLocation>
    <text>In interphase localized in the cytoplasm and (with higher levels) the nucleus. During metaphase located in pericentriolar regions.</text>
</comment>
<comment type="alternative products">
    <event type="alternative splicing"/>
    <isoform>
        <id>Q922R5-1</id>
        <name>1</name>
        <sequence type="displayed"/>
    </isoform>
    <isoform>
        <id>Q922R5-2</id>
        <name>2</name>
        <sequence type="described" ref="VSP_021264 VSP_021265"/>
    </isoform>
</comment>
<comment type="similarity">
    <text evidence="5">Belongs to the SMEK family.</text>
</comment>
<comment type="sequence caution" evidence="5">
    <conflict type="erroneous initiation">
        <sequence resource="EMBL-CDS" id="BAC98154"/>
    </conflict>
</comment>
<name>P4R3B_MOUSE</name>
<organism>
    <name type="scientific">Mus musculus</name>
    <name type="common">Mouse</name>
    <dbReference type="NCBI Taxonomy" id="10090"/>
    <lineage>
        <taxon>Eukaryota</taxon>
        <taxon>Metazoa</taxon>
        <taxon>Chordata</taxon>
        <taxon>Craniata</taxon>
        <taxon>Vertebrata</taxon>
        <taxon>Euteleostomi</taxon>
        <taxon>Mammalia</taxon>
        <taxon>Eutheria</taxon>
        <taxon>Euarchontoglires</taxon>
        <taxon>Glires</taxon>
        <taxon>Rodentia</taxon>
        <taxon>Myomorpha</taxon>
        <taxon>Muroidea</taxon>
        <taxon>Muridae</taxon>
        <taxon>Murinae</taxon>
        <taxon>Mus</taxon>
        <taxon>Mus</taxon>
    </lineage>
</organism>
<accession>Q922R5</accession>
<accession>Q3V0E4</accession>
<accession>Q5M6V9</accession>
<accession>Q5RJC0</accession>
<accession>Q5RJC1</accession>
<accession>Q6ZPS5</accession>
<accession>Q8BTK2</accession>
<accession>Q8BY94</accession>
<accession>Q8BYY0</accession>
<evidence type="ECO:0000250" key="1"/>
<evidence type="ECO:0000250" key="2">
    <source>
        <dbReference type="UniProtKB" id="Q5MIZ7"/>
    </source>
</evidence>
<evidence type="ECO:0000256" key="3">
    <source>
        <dbReference type="SAM" id="MobiDB-lite"/>
    </source>
</evidence>
<evidence type="ECO:0000303" key="4">
    <source>
    </source>
</evidence>
<evidence type="ECO:0000305" key="5"/>
<evidence type="ECO:0007744" key="6">
    <source>
    </source>
</evidence>
<keyword id="KW-0025">Alternative splicing</keyword>
<keyword id="KW-0963">Cytoplasm</keyword>
<keyword id="KW-0206">Cytoskeleton</keyword>
<keyword id="KW-0539">Nucleus</keyword>
<keyword id="KW-0597">Phosphoprotein</keyword>
<keyword id="KW-1185">Reference proteome</keyword>
<protein>
    <recommendedName>
        <fullName evidence="2">Serine/threonine-protein phosphatase 4 regulatory subunit 3B</fullName>
    </recommendedName>
    <alternativeName>
        <fullName>SMEK homolog 2</fullName>
    </alternativeName>
</protein>